<protein>
    <recommendedName>
        <fullName evidence="1">Tritrans,polycis-undecaprenyl-diphosphate synthase (geranylgeranyl-diphosphate specific)</fullName>
        <ecNumber evidence="1">2.5.1.89</ecNumber>
    </recommendedName>
    <alternativeName>
        <fullName evidence="1">Undecaprenyl diphosphate synthase</fullName>
        <shortName evidence="1">UDS</shortName>
    </alternativeName>
    <alternativeName>
        <fullName evidence="1">Undecaprenyl pyrophosphate synthase</fullName>
        <shortName evidence="1">UPP synthase</shortName>
    </alternativeName>
</protein>
<organism>
    <name type="scientific">Archaeoglobus fulgidus (strain ATCC 49558 / DSM 4304 / JCM 9628 / NBRC 100126 / VC-16)</name>
    <dbReference type="NCBI Taxonomy" id="224325"/>
    <lineage>
        <taxon>Archaea</taxon>
        <taxon>Methanobacteriati</taxon>
        <taxon>Methanobacteriota</taxon>
        <taxon>Archaeoglobi</taxon>
        <taxon>Archaeoglobales</taxon>
        <taxon>Archaeoglobaceae</taxon>
        <taxon>Archaeoglobus</taxon>
    </lineage>
</organism>
<reference key="1">
    <citation type="journal article" date="1997" name="Nature">
        <title>The complete genome sequence of the hyperthermophilic, sulphate-reducing archaeon Archaeoglobus fulgidus.</title>
        <authorList>
            <person name="Klenk H.-P."/>
            <person name="Clayton R.A."/>
            <person name="Tomb J.-F."/>
            <person name="White O."/>
            <person name="Nelson K.E."/>
            <person name="Ketchum K.A."/>
            <person name="Dodson R.J."/>
            <person name="Gwinn M.L."/>
            <person name="Hickey E.K."/>
            <person name="Peterson J.D."/>
            <person name="Richardson D.L."/>
            <person name="Kerlavage A.R."/>
            <person name="Graham D.E."/>
            <person name="Kyrpides N.C."/>
            <person name="Fleischmann R.D."/>
            <person name="Quackenbush J."/>
            <person name="Lee N.H."/>
            <person name="Sutton G.G."/>
            <person name="Gill S.R."/>
            <person name="Kirkness E.F."/>
            <person name="Dougherty B.A."/>
            <person name="McKenney K."/>
            <person name="Adams M.D."/>
            <person name="Loftus B.J."/>
            <person name="Peterson S.N."/>
            <person name="Reich C.I."/>
            <person name="McNeil L.K."/>
            <person name="Badger J.H."/>
            <person name="Glodek A."/>
            <person name="Zhou L."/>
            <person name="Overbeek R."/>
            <person name="Gocayne J.D."/>
            <person name="Weidman J.F."/>
            <person name="McDonald L.A."/>
            <person name="Utterback T.R."/>
            <person name="Cotton M.D."/>
            <person name="Spriggs T."/>
            <person name="Artiach P."/>
            <person name="Kaine B.P."/>
            <person name="Sykes S.M."/>
            <person name="Sadow P.W."/>
            <person name="D'Andrea K.P."/>
            <person name="Bowman C."/>
            <person name="Fujii C."/>
            <person name="Garland S.A."/>
            <person name="Mason T.M."/>
            <person name="Olsen G.J."/>
            <person name="Fraser C.M."/>
            <person name="Smith H.O."/>
            <person name="Woese C.R."/>
            <person name="Venter J.C."/>
        </authorList>
    </citation>
    <scope>NUCLEOTIDE SEQUENCE [LARGE SCALE GENOMIC DNA]</scope>
    <source>
        <strain>ATCC 49558 / DSM 4304 / JCM 9628 / NBRC 100126 / VC-16</strain>
    </source>
</reference>
<comment type="function">
    <text evidence="1">Catalyzes the sequential condensation of isopentenyl diphosphate (IPP) with geranylgeranyl diphosphate (GGPP) to yield (2Z,6Z,10Z,14Z,18Z,22Z,26Z,30E,34E,38E)-undecaprenyl diphosphate (tritrans,heptacis-UPP). It is probably the precursor of glycosyl carrier lipids.</text>
</comment>
<comment type="catalytic activity">
    <reaction evidence="1">
        <text>geranylgeranyl diphosphate + 7 isopentenyl diphosphate = tri-trans,hepta-cis-undecaprenyl diphosphate + 7 diphosphate</text>
        <dbReference type="Rhea" id="RHEA:27622"/>
        <dbReference type="ChEBI" id="CHEBI:33019"/>
        <dbReference type="ChEBI" id="CHEBI:57533"/>
        <dbReference type="ChEBI" id="CHEBI:60388"/>
        <dbReference type="ChEBI" id="CHEBI:128769"/>
        <dbReference type="EC" id="2.5.1.89"/>
    </reaction>
</comment>
<comment type="cofactor">
    <cofactor evidence="1">
        <name>Mg(2+)</name>
        <dbReference type="ChEBI" id="CHEBI:18420"/>
    </cofactor>
    <text evidence="1">Binds 2 magnesium ions per subunit.</text>
</comment>
<comment type="subunit">
    <text evidence="1">Homodimer.</text>
</comment>
<comment type="similarity">
    <text evidence="1">Belongs to the UPP synthase family.</text>
</comment>
<name>UPPS_ARCFU</name>
<accession>O29049</accession>
<feature type="chain" id="PRO_0000123727" description="Tritrans,polycis-undecaprenyl-diphosphate synthase (geranylgeranyl-diphosphate specific)">
    <location>
        <begin position="1"/>
        <end position="251"/>
    </location>
</feature>
<feature type="active site" evidence="1">
    <location>
        <position position="29"/>
    </location>
</feature>
<feature type="active site" description="Proton acceptor" evidence="1">
    <location>
        <position position="77"/>
    </location>
</feature>
<feature type="binding site" evidence="1">
    <location>
        <position position="29"/>
    </location>
    <ligand>
        <name>Mg(2+)</name>
        <dbReference type="ChEBI" id="CHEBI:18420"/>
    </ligand>
</feature>
<feature type="binding site" evidence="1">
    <location>
        <begin position="30"/>
        <end position="33"/>
    </location>
    <ligand>
        <name>substrate</name>
    </ligand>
</feature>
<feature type="binding site" evidence="1">
    <location>
        <position position="34"/>
    </location>
    <ligand>
        <name>substrate</name>
    </ligand>
</feature>
<feature type="binding site" evidence="1">
    <location>
        <position position="46"/>
    </location>
    <ligand>
        <name>substrate</name>
    </ligand>
</feature>
<feature type="binding site" evidence="1">
    <location>
        <begin position="74"/>
        <end position="76"/>
    </location>
    <ligand>
        <name>substrate</name>
    </ligand>
</feature>
<feature type="binding site" evidence="1">
    <location>
        <position position="78"/>
    </location>
    <ligand>
        <name>substrate</name>
    </ligand>
</feature>
<feature type="binding site" evidence="1">
    <location>
        <position position="80"/>
    </location>
    <ligand>
        <name>substrate</name>
    </ligand>
</feature>
<feature type="binding site" evidence="1">
    <location>
        <position position="200"/>
    </location>
    <ligand>
        <name>substrate</name>
    </ligand>
</feature>
<feature type="binding site" evidence="1">
    <location>
        <begin position="206"/>
        <end position="208"/>
    </location>
    <ligand>
        <name>substrate</name>
    </ligand>
</feature>
<dbReference type="EC" id="2.5.1.89" evidence="1"/>
<dbReference type="EMBL" id="AE000782">
    <property type="protein sequence ID" value="AAB90027.1"/>
    <property type="molecule type" value="Genomic_DNA"/>
</dbReference>
<dbReference type="PIR" id="B69402">
    <property type="entry name" value="B69402"/>
</dbReference>
<dbReference type="RefSeq" id="WP_010878714.1">
    <property type="nucleotide sequence ID" value="NC_000917.1"/>
</dbReference>
<dbReference type="SMR" id="O29049"/>
<dbReference type="STRING" id="224325.AF_1219"/>
<dbReference type="PaxDb" id="224325-AF_1219"/>
<dbReference type="EnsemblBacteria" id="AAB90027">
    <property type="protein sequence ID" value="AAB90027"/>
    <property type="gene ID" value="AF_1219"/>
</dbReference>
<dbReference type="GeneID" id="1484443"/>
<dbReference type="KEGG" id="afu:AF_1219"/>
<dbReference type="eggNOG" id="arCOG01532">
    <property type="taxonomic scope" value="Archaea"/>
</dbReference>
<dbReference type="HOGENOM" id="CLU_038505_2_0_2"/>
<dbReference type="OrthoDB" id="8293at2157"/>
<dbReference type="PhylomeDB" id="O29049"/>
<dbReference type="Proteomes" id="UP000002199">
    <property type="component" value="Chromosome"/>
</dbReference>
<dbReference type="GO" id="GO:0045547">
    <property type="term" value="F:ditrans,polycis-polyprenyl diphosphate synthase [(2E,6E)-farnesyl diphosphate specific] activity"/>
    <property type="evidence" value="ECO:0007669"/>
    <property type="project" value="TreeGrafter"/>
</dbReference>
<dbReference type="GO" id="GO:0000287">
    <property type="term" value="F:magnesium ion binding"/>
    <property type="evidence" value="ECO:0007669"/>
    <property type="project" value="UniProtKB-UniRule"/>
</dbReference>
<dbReference type="GO" id="GO:0016094">
    <property type="term" value="P:polyprenol biosynthetic process"/>
    <property type="evidence" value="ECO:0007669"/>
    <property type="project" value="TreeGrafter"/>
</dbReference>
<dbReference type="CDD" id="cd00475">
    <property type="entry name" value="Cis_IPPS"/>
    <property type="match status" value="1"/>
</dbReference>
<dbReference type="FunFam" id="3.40.1180.10:FF:000003">
    <property type="entry name" value="Isoprenyl transferase 2"/>
    <property type="match status" value="1"/>
</dbReference>
<dbReference type="Gene3D" id="3.40.1180.10">
    <property type="entry name" value="Decaprenyl diphosphate synthase-like"/>
    <property type="match status" value="1"/>
</dbReference>
<dbReference type="HAMAP" id="MF_01139">
    <property type="entry name" value="ISPT"/>
    <property type="match status" value="1"/>
</dbReference>
<dbReference type="InterPro" id="IPR001441">
    <property type="entry name" value="UPP_synth-like"/>
</dbReference>
<dbReference type="InterPro" id="IPR018520">
    <property type="entry name" value="UPP_synth-like_CS"/>
</dbReference>
<dbReference type="InterPro" id="IPR036424">
    <property type="entry name" value="UPP_synth-like_sf"/>
</dbReference>
<dbReference type="NCBIfam" id="TIGR00055">
    <property type="entry name" value="uppS"/>
    <property type="match status" value="1"/>
</dbReference>
<dbReference type="PANTHER" id="PTHR10291:SF43">
    <property type="entry name" value="DEHYDRODOLICHYL DIPHOSPHATE SYNTHASE COMPLEX SUBUNIT DHDDS"/>
    <property type="match status" value="1"/>
</dbReference>
<dbReference type="PANTHER" id="PTHR10291">
    <property type="entry name" value="DEHYDRODOLICHYL DIPHOSPHATE SYNTHASE FAMILY MEMBER"/>
    <property type="match status" value="1"/>
</dbReference>
<dbReference type="Pfam" id="PF01255">
    <property type="entry name" value="Prenyltransf"/>
    <property type="match status" value="1"/>
</dbReference>
<dbReference type="SUPFAM" id="SSF64005">
    <property type="entry name" value="Undecaprenyl diphosphate synthase"/>
    <property type="match status" value="1"/>
</dbReference>
<dbReference type="PROSITE" id="PS01066">
    <property type="entry name" value="UPP_SYNTHASE"/>
    <property type="match status" value="1"/>
</dbReference>
<keyword id="KW-0460">Magnesium</keyword>
<keyword id="KW-0479">Metal-binding</keyword>
<keyword id="KW-1185">Reference proteome</keyword>
<keyword id="KW-0808">Transferase</keyword>
<proteinExistence type="inferred from homology"/>
<sequence length="251" mass="30091">MIFHKIYENKLLRSVRKGAIPHHIAIIMDGNRRFARKKGLEPHEGHFFGSKKAEEVLEWCWDLGVKMLTLYAFSTENFRRSEKEKKNIFQLLESELRRLLKDRRTYERELRVKVVGKRELLPENLRETIKEVEERTKKHRRHYLNVAVAYGGRQEIIDAVRAILRKVRKGEVRPEEIDEKMLEEHLYGEGRYSKVDLIIRTGGEQRLSNFLPWQAANSVAYFCDVYWPEFRKIDLLRAIRAWQYRKSHEVV</sequence>
<gene>
    <name evidence="1" type="primary">uppS</name>
    <name type="ordered locus">AF_1219</name>
</gene>
<evidence type="ECO:0000255" key="1">
    <source>
        <dbReference type="HAMAP-Rule" id="MF_01139"/>
    </source>
</evidence>